<reference key="1">
    <citation type="journal article" date="1982" name="Proc. Natl. Acad. Sci. U.S.A.">
        <title>Molecular cloning and nucleotide sequence of full-length of cDNA coding for porcine gastrin.</title>
        <authorList>
            <person name="Yoo O.J."/>
            <person name="Powell C.T."/>
            <person name="Agarwal K.L."/>
        </authorList>
    </citation>
    <scope>NUCLEOTIDE SEQUENCE [MRNA]</scope>
</reference>
<reference key="2">
    <citation type="journal article" date="1980" name="Ann. N. Y. Acad. Sci.">
        <title>Studies on gastrin mRNA structure using an oligonucleotide probe.</title>
        <authorList>
            <person name="Agarwal K.L."/>
            <person name="Noyes B.E."/>
        </authorList>
    </citation>
    <scope>NUCLEOTIDE SEQUENCE [MRNA] OF 56-82</scope>
</reference>
<reference key="3">
    <citation type="journal article" date="1964" name="Nature">
        <title>The antral hormone gastrin. Structure of gastrin.</title>
        <authorList>
            <person name="Gregory H."/>
            <person name="Hardy P.M."/>
            <person name="Jones D.S."/>
            <person name="Kenner G.W."/>
            <person name="Sheppard R.C."/>
        </authorList>
    </citation>
    <scope>PROTEIN SEQUENCE OF 76-92</scope>
</reference>
<reference key="4">
    <citation type="journal article" date="1964" name="Nature">
        <title>Synthesis of gastrin.</title>
        <authorList>
            <person name="Anderson J.C."/>
            <person name="Barton M.A."/>
            <person name="Gregory R.A."/>
            <person name="Hardy P.M."/>
            <person name="Kenner G.W."/>
            <person name="McLeod J.K."/>
            <person name="Preston J."/>
            <person name="Sheppard R.C."/>
            <person name="Morley J.S."/>
        </authorList>
    </citation>
    <scope>SYNTHESIS</scope>
</reference>
<reference key="5">
    <citation type="journal article" date="1995" name="EMBO J.">
        <title>Post-poly(Glu) cleavage and degradation modified by O-sulfated tyrosine: a novel post-translational processing mechanism.</title>
        <authorList>
            <person name="Rehfeld J.F."/>
            <person name="Hansen C.P."/>
            <person name="Johnsen A.H."/>
        </authorList>
    </citation>
    <scope>PROTEOLYTIC PROCESSING</scope>
    <scope>IDENTIFICATION BY MASS SPECTROMETRY</scope>
    <scope>SULFATION AT TYR-87</scope>
</reference>
<protein>
    <recommendedName>
        <fullName>Gastrin</fullName>
    </recommendedName>
    <component>
        <recommendedName>
            <fullName>Big gastrin</fullName>
        </recommendedName>
        <alternativeName>
            <fullName>Gastrin-34</fullName>
            <shortName>G34</shortName>
        </alternativeName>
    </component>
    <component>
        <recommendedName>
            <fullName>Gastrin</fullName>
        </recommendedName>
    </component>
</protein>
<dbReference type="EMBL" id="V01303">
    <property type="protein sequence ID" value="CAA24610.1"/>
    <property type="molecule type" value="mRNA"/>
</dbReference>
<dbReference type="EMBL" id="M25036">
    <property type="protein sequence ID" value="AAA31111.1"/>
    <property type="molecule type" value="mRNA"/>
</dbReference>
<dbReference type="PIR" id="A93903">
    <property type="entry name" value="GMPGB"/>
</dbReference>
<dbReference type="RefSeq" id="NP_001004036.1">
    <property type="nucleotide sequence ID" value="NM_001004036.2"/>
</dbReference>
<dbReference type="FunCoup" id="P01351">
    <property type="interactions" value="59"/>
</dbReference>
<dbReference type="STRING" id="9823.ENSSSCP00000022312"/>
<dbReference type="PaxDb" id="9823-ENSSSCP00000022312"/>
<dbReference type="GeneID" id="445524"/>
<dbReference type="KEGG" id="ssc:445524"/>
<dbReference type="CTD" id="2520"/>
<dbReference type="eggNOG" id="ENOG502SA9S">
    <property type="taxonomic scope" value="Eukaryota"/>
</dbReference>
<dbReference type="InParanoid" id="P01351"/>
<dbReference type="OrthoDB" id="9924917at2759"/>
<dbReference type="Proteomes" id="UP000008227">
    <property type="component" value="Unplaced"/>
</dbReference>
<dbReference type="Proteomes" id="UP000314985">
    <property type="component" value="Unplaced"/>
</dbReference>
<dbReference type="Proteomes" id="UP000694570">
    <property type="component" value="Unplaced"/>
</dbReference>
<dbReference type="Proteomes" id="UP000694571">
    <property type="component" value="Unplaced"/>
</dbReference>
<dbReference type="Proteomes" id="UP000694720">
    <property type="component" value="Unplaced"/>
</dbReference>
<dbReference type="Proteomes" id="UP000694722">
    <property type="component" value="Unplaced"/>
</dbReference>
<dbReference type="Proteomes" id="UP000694723">
    <property type="component" value="Unplaced"/>
</dbReference>
<dbReference type="Proteomes" id="UP000694724">
    <property type="component" value="Unplaced"/>
</dbReference>
<dbReference type="Proteomes" id="UP000694725">
    <property type="component" value="Unplaced"/>
</dbReference>
<dbReference type="Proteomes" id="UP000694726">
    <property type="component" value="Unplaced"/>
</dbReference>
<dbReference type="Proteomes" id="UP000694727">
    <property type="component" value="Unplaced"/>
</dbReference>
<dbReference type="Proteomes" id="UP000694728">
    <property type="component" value="Unplaced"/>
</dbReference>
<dbReference type="GO" id="GO:0005615">
    <property type="term" value="C:extracellular space"/>
    <property type="evidence" value="ECO:0000318"/>
    <property type="project" value="GO_Central"/>
</dbReference>
<dbReference type="GO" id="GO:0005179">
    <property type="term" value="F:hormone activity"/>
    <property type="evidence" value="ECO:0000318"/>
    <property type="project" value="GO_Central"/>
</dbReference>
<dbReference type="GO" id="GO:0007186">
    <property type="term" value="P:G protein-coupled receptor signaling pathway"/>
    <property type="evidence" value="ECO:0000318"/>
    <property type="project" value="GO_Central"/>
</dbReference>
<dbReference type="GO" id="GO:0032094">
    <property type="term" value="P:response to food"/>
    <property type="evidence" value="ECO:0000318"/>
    <property type="project" value="GO_Central"/>
</dbReference>
<dbReference type="InterPro" id="IPR039236">
    <property type="entry name" value="GAST"/>
</dbReference>
<dbReference type="InterPro" id="IPR001651">
    <property type="entry name" value="Gastrin/CCK"/>
</dbReference>
<dbReference type="InterPro" id="IPR013152">
    <property type="entry name" value="Gastrin/cholecystokinin_CS"/>
</dbReference>
<dbReference type="PANTHER" id="PTHR19309">
    <property type="entry name" value="GASTRIN"/>
    <property type="match status" value="1"/>
</dbReference>
<dbReference type="PANTHER" id="PTHR19309:SF0">
    <property type="entry name" value="GASTRIN"/>
    <property type="match status" value="1"/>
</dbReference>
<dbReference type="Pfam" id="PF00918">
    <property type="entry name" value="Gastrin"/>
    <property type="match status" value="1"/>
</dbReference>
<dbReference type="PROSITE" id="PS00259">
    <property type="entry name" value="GASTRIN"/>
    <property type="match status" value="1"/>
</dbReference>
<evidence type="ECO:0000250" key="1"/>
<evidence type="ECO:0000250" key="2">
    <source>
        <dbReference type="UniProtKB" id="P01350"/>
    </source>
</evidence>
<evidence type="ECO:0000250" key="3">
    <source>
        <dbReference type="UniProtKB" id="P01353"/>
    </source>
</evidence>
<evidence type="ECO:0000255" key="4"/>
<evidence type="ECO:0000256" key="5">
    <source>
        <dbReference type="SAM" id="MobiDB-lite"/>
    </source>
</evidence>
<evidence type="ECO:0000269" key="6">
    <source>
    </source>
</evidence>
<evidence type="ECO:0000305" key="7"/>
<name>GAST_PIG</name>
<sequence length="104" mass="11558">MQRLCAYVLIHVLALAACSEASWKPGFQLQDASSGPGANRGKEPHELDRLGPASHHRRQLGLQGPPHLVADLAKKQGPWMEEEEEAYGWMDFGRRSAEEGDQRP</sequence>
<feature type="signal peptide" evidence="4">
    <location>
        <begin position="1"/>
        <end position="21"/>
    </location>
</feature>
<feature type="propeptide" id="PRO_0000010644">
    <location>
        <begin position="22"/>
        <end position="58"/>
    </location>
</feature>
<feature type="peptide" id="PRO_0000010645" description="Big gastrin">
    <location>
        <begin position="59"/>
        <end position="92"/>
    </location>
</feature>
<feature type="peptide" id="PRO_0000010646" description="Gastrin">
    <location>
        <begin position="76"/>
        <end position="92"/>
    </location>
</feature>
<feature type="propeptide" id="PRO_0000010647">
    <location>
        <begin position="96"/>
        <end position="104"/>
    </location>
</feature>
<feature type="region of interest" description="Disordered" evidence="5">
    <location>
        <begin position="27"/>
        <end position="67"/>
    </location>
</feature>
<feature type="compositionally biased region" description="Basic and acidic residues" evidence="5">
    <location>
        <begin position="40"/>
        <end position="49"/>
    </location>
</feature>
<feature type="modified residue" description="Pyrrolidone carboxylic acid; in form big gastrin" evidence="2">
    <location>
        <position position="59"/>
    </location>
</feature>
<feature type="modified residue" description="Pyrrolidone carboxylic acid; in form gastrin" evidence="2">
    <location>
        <position position="76"/>
    </location>
</feature>
<feature type="modified residue" description="Sulfotyrosine; partial" evidence="6">
    <location>
        <position position="87"/>
    </location>
</feature>
<feature type="modified residue" description="Phenylalanine amide" evidence="1">
    <location>
        <position position="92"/>
    </location>
</feature>
<feature type="modified residue" description="Phosphoserine" evidence="3">
    <location>
        <position position="96"/>
    </location>
</feature>
<comment type="function">
    <text>Gastrin stimulates the stomach mucosa to produce and secrete hydrochloric acid and the pancreas to secrete its digestive enzymes. It also stimulates smooth muscle contraction and increases blood circulation and water secretion in the stomach and intestine.</text>
</comment>
<comment type="subcellular location">
    <subcellularLocation>
        <location>Secreted</location>
    </subcellularLocation>
</comment>
<comment type="PTM">
    <text evidence="6">Sulfation enhances proteolytic processing, and blocks peptide degradation. Levels of sulfation differ between proteolytically-cleaved gastrins. Thus, gastrin-6 is almost 73% sulfated, whereas the larger gastrins are less than 50% sulfated. Sulfation levels are also tissue-specific.</text>
</comment>
<comment type="similarity">
    <text evidence="7">Belongs to the gastrin/cholecystokinin family.</text>
</comment>
<accession>P01351</accession>
<organism>
    <name type="scientific">Sus scrofa</name>
    <name type="common">Pig</name>
    <dbReference type="NCBI Taxonomy" id="9823"/>
    <lineage>
        <taxon>Eukaryota</taxon>
        <taxon>Metazoa</taxon>
        <taxon>Chordata</taxon>
        <taxon>Craniata</taxon>
        <taxon>Vertebrata</taxon>
        <taxon>Euteleostomi</taxon>
        <taxon>Mammalia</taxon>
        <taxon>Eutheria</taxon>
        <taxon>Laurasiatheria</taxon>
        <taxon>Artiodactyla</taxon>
        <taxon>Suina</taxon>
        <taxon>Suidae</taxon>
        <taxon>Sus</taxon>
    </lineage>
</organism>
<proteinExistence type="evidence at protein level"/>
<keyword id="KW-0027">Amidation</keyword>
<keyword id="KW-0165">Cleavage on pair of basic residues</keyword>
<keyword id="KW-0903">Direct protein sequencing</keyword>
<keyword id="KW-0372">Hormone</keyword>
<keyword id="KW-0597">Phosphoprotein</keyword>
<keyword id="KW-0873">Pyrrolidone carboxylic acid</keyword>
<keyword id="KW-1185">Reference proteome</keyword>
<keyword id="KW-0964">Secreted</keyword>
<keyword id="KW-0732">Signal</keyword>
<keyword id="KW-0765">Sulfation</keyword>
<gene>
    <name type="primary">GAST</name>
    <name type="synonym">GAS</name>
</gene>